<feature type="chain" id="PRO_0000404239" description="Viral guanylyltransferase VP3">
    <location>
        <begin position="1"/>
        <end position="720"/>
    </location>
</feature>
<reference key="1">
    <citation type="journal article" date="2000" name="J. Gen. Virol.">
        <title>Complete sequence determination and genetic analysis of Banna virus and Kadipiro virus: proposal for assignment to a new genus (Seadornavirus) within the family Reoviridae.</title>
        <authorList>
            <person name="Attoui H."/>
            <person name="Billoir F."/>
            <person name="Biagini P."/>
            <person name="de Micco P."/>
            <person name="de Lamballerie X."/>
        </authorList>
    </citation>
    <scope>NUCLEOTIDE SEQUENCE [GENOMIC RNA]</scope>
    <source>
        <strain>JKT-6423</strain>
    </source>
</reference>
<reference key="2">
    <citation type="journal article" date="2005" name="J. Gen. Virol.">
        <title>Identification and functional analysis of VP3, the guanylyltransferase of Banna virus (genus Seadornavirus, family Reoviridae).</title>
        <authorList>
            <person name="Mohd Jaafar F."/>
            <person name="Attoui H."/>
            <person name="Mertens P.P."/>
            <person name="de Micco P."/>
            <person name="de Lamballerie X."/>
        </authorList>
    </citation>
    <scope>FUNCTION</scope>
    <scope>CATALYTIC ACTIVITY</scope>
</reference>
<reference key="3">
    <citation type="journal article" date="2005" name="J. Gen. Virol.">
        <title>Structural organization of an encephalitic human isolate of Banna virus (genus Seadornavirus, family Reoviridae).</title>
        <authorList>
            <person name="Mohd Jaafar F."/>
            <person name="Attoui H."/>
            <person name="Mertens P.P."/>
            <person name="de Micco P."/>
            <person name="de Lamballerie X."/>
        </authorList>
    </citation>
    <scope>SUBCELLULAR LOCATION</scope>
</reference>
<evidence type="ECO:0000269" key="1">
    <source>
    </source>
</evidence>
<evidence type="ECO:0000269" key="2">
    <source>
    </source>
</evidence>
<evidence type="ECO:0000305" key="3">
    <source>
    </source>
</evidence>
<keyword id="KW-0067">ATP-binding</keyword>
<keyword id="KW-0167">Capsid protein</keyword>
<keyword id="KW-0342">GTP-binding</keyword>
<keyword id="KW-0489">Methyltransferase</keyword>
<keyword id="KW-0506">mRNA capping</keyword>
<keyword id="KW-0507">mRNA processing</keyword>
<keyword id="KW-0511">Multifunctional enzyme</keyword>
<keyword id="KW-0547">Nucleotide-binding</keyword>
<keyword id="KW-1185">Reference proteome</keyword>
<keyword id="KW-0949">S-adenosyl-L-methionine</keyword>
<keyword id="KW-0808">Transferase</keyword>
<keyword id="KW-0946">Virion</keyword>
<dbReference type="EC" id="2.7.7.50" evidence="1"/>
<dbReference type="EC" id="2.1.1.56" evidence="3"/>
<dbReference type="EMBL" id="AF134515">
    <property type="protein sequence ID" value="AAF78856.1"/>
    <property type="molecule type" value="Genomic_RNA"/>
</dbReference>
<dbReference type="RefSeq" id="NP_694476.1">
    <property type="nucleotide sequence ID" value="NC_004218.1"/>
</dbReference>
<dbReference type="KEGG" id="vg:995349"/>
<dbReference type="OrthoDB" id="7863at10239"/>
<dbReference type="BRENDA" id="2.7.7.50">
    <property type="organism ID" value="8007"/>
</dbReference>
<dbReference type="Proteomes" id="UP000000832">
    <property type="component" value="Genome"/>
</dbReference>
<dbReference type="GO" id="GO:0019028">
    <property type="term" value="C:viral capsid"/>
    <property type="evidence" value="ECO:0007669"/>
    <property type="project" value="UniProtKB-KW"/>
</dbReference>
<dbReference type="GO" id="GO:0005524">
    <property type="term" value="F:ATP binding"/>
    <property type="evidence" value="ECO:0007669"/>
    <property type="project" value="UniProtKB-KW"/>
</dbReference>
<dbReference type="GO" id="GO:0005525">
    <property type="term" value="F:GTP binding"/>
    <property type="evidence" value="ECO:0007669"/>
    <property type="project" value="UniProtKB-KW"/>
</dbReference>
<dbReference type="GO" id="GO:0004482">
    <property type="term" value="F:mRNA 5'-cap (guanine-N7-)-methyltransferase activity"/>
    <property type="evidence" value="ECO:0007669"/>
    <property type="project" value="UniProtKB-EC"/>
</dbReference>
<dbReference type="GO" id="GO:0004484">
    <property type="term" value="F:mRNA guanylyltransferase activity"/>
    <property type="evidence" value="ECO:0007669"/>
    <property type="project" value="UniProtKB-EC"/>
</dbReference>
<dbReference type="InterPro" id="IPR026379">
    <property type="entry name" value="Seadorna_VP3"/>
</dbReference>
<dbReference type="NCBIfam" id="TIGR04232">
    <property type="entry name" value="seadorna_VP3"/>
    <property type="match status" value="1"/>
</dbReference>
<gene>
    <name type="primary">Segment-3</name>
    <name type="synonym">S3</name>
</gene>
<protein>
    <recommendedName>
        <fullName>Viral guanylyltransferase VP3</fullName>
    </recommendedName>
    <alternativeName>
        <fullName>Virion protein 3</fullName>
        <shortName>VP3</shortName>
    </alternativeName>
    <domain>
        <recommendedName>
            <fullName>mRNA guanylyltransferase</fullName>
            <ecNumber evidence="1">2.7.7.50</ecNumber>
        </recommendedName>
    </domain>
    <domain>
        <recommendedName>
            <fullName>mRNA (guanine-N(7))-methyltransferase</fullName>
            <ecNumber evidence="3">2.1.1.56</ecNumber>
        </recommendedName>
    </domain>
</protein>
<organism>
    <name type="scientific">Banna virus</name>
    <name type="common">BAV</name>
    <dbReference type="NCBI Taxonomy" id="77763"/>
    <lineage>
        <taxon>Viruses</taxon>
        <taxon>Riboviria</taxon>
        <taxon>Orthornavirae</taxon>
        <taxon>Duplornaviricota</taxon>
        <taxon>Resentoviricetes</taxon>
        <taxon>Reovirales</taxon>
        <taxon>Sedoreoviridae</taxon>
        <taxon>Seadornavirus</taxon>
        <taxon>Seadornavirus bannaense</taxon>
    </lineage>
</organism>
<proteinExistence type="evidence at protein level"/>
<sequence length="720" mass="82120">MELFSDSGSIVENFKERINKLVFDYSLNHGGFRKTYKIQRDRVYYMLGDAHHANLSGKCLMLYNSEKDIFEGLGFKVKGSRINVSKTQILRNYEINFETIIGVEPNGLKTISTAKDVKKLYDIYSYKSSLHPFDDFMAHCINRWGMSIPASLERIIKSEIIKVRSGVLNRNSELYNYIPTVDASFSEMSRGPANVILTDGKLVPDGTCFGPILSKSVEDPRLKNEFRSKGLIMVHDYFILIGESPGPHYKKYTKMTKDNTIFWDPRRTDHKFNNVVSYFKKENIRDVVEYTTDALNRGLKPLVLIDIRKDKPKNLNTPEGAIEWERMVHDDNNLIIDMVNALDKRVTVCAKLRPAFMQVGSMRKLLRPVRILPLPYLRRSTAEFNMFVPNEALMNGNEIYDVTYDDLVRMSSEVFVLKNIIGGLYNMYLKDMHLNLGVVNKSVSLSDGSSAIWSLSNINNERISNFNFNNFLYAAPYSDFATSSVKRHFKGRNYSDWCLNILDEVNLKDGVYLVPLYAIVGGGQITSHDFVNAIITDQEQLIDFTQSERALSTQVVKLVSFILKDSFTAKGLNWTEIDNEIRNRRLSSLSGVGFTVTKMLDGKVLVDGKVVTVSGHMLYILLGSILGLPYGIKKYLKEIELNILKPGSSYERGVGGRVWHGLISHYLAVDCVIDVIDEYMVCTYEDRSKLNVVLRYVKSKLLELGSKYDVYLSVDERLVL</sequence>
<name>VP3_BANNV</name>
<comment type="function">
    <text evidence="1">Outer capsid protein involved in mRNA capping. Catalyzes the last 3 enzymatic activities for formation of the 5' cap structure on the viral plus-strand transcripts, namely the RNA guanylyltransferase, RNA-7N- and RNA-2'O-methyltransferase activities.</text>
</comment>
<comment type="catalytic activity">
    <reaction evidence="1">
        <text>a 5'-end diphospho-ribonucleoside in mRNA + GTP + H(+) = a 5'-end (5'-triphosphoguanosine)-ribonucleoside in mRNA + diphosphate</text>
        <dbReference type="Rhea" id="RHEA:67012"/>
        <dbReference type="Rhea" id="RHEA-COMP:17165"/>
        <dbReference type="Rhea" id="RHEA-COMP:17166"/>
        <dbReference type="ChEBI" id="CHEBI:15378"/>
        <dbReference type="ChEBI" id="CHEBI:33019"/>
        <dbReference type="ChEBI" id="CHEBI:37565"/>
        <dbReference type="ChEBI" id="CHEBI:167616"/>
        <dbReference type="ChEBI" id="CHEBI:167617"/>
        <dbReference type="EC" id="2.7.7.50"/>
    </reaction>
</comment>
<comment type="catalytic activity">
    <reaction evidence="3">
        <text>a 5'-end (5'-triphosphoguanosine)-ribonucleoside in mRNA + S-adenosyl-L-methionine = a 5'-end (N(7)-methyl 5'-triphosphoguanosine)-ribonucleoside in mRNA + S-adenosyl-L-homocysteine</text>
        <dbReference type="Rhea" id="RHEA:67008"/>
        <dbReference type="Rhea" id="RHEA-COMP:17166"/>
        <dbReference type="Rhea" id="RHEA-COMP:17167"/>
        <dbReference type="ChEBI" id="CHEBI:57856"/>
        <dbReference type="ChEBI" id="CHEBI:59789"/>
        <dbReference type="ChEBI" id="CHEBI:156461"/>
        <dbReference type="ChEBI" id="CHEBI:167617"/>
        <dbReference type="EC" id="2.1.1.56"/>
    </reaction>
</comment>
<comment type="subcellular location">
    <subcellularLocation>
        <location evidence="2">Virion</location>
    </subcellularLocation>
</comment>
<accession>Q9INI4</accession>